<organism>
    <name type="scientific">Pectobacterium atrosepticum (strain SCRI 1043 / ATCC BAA-672)</name>
    <name type="common">Erwinia carotovora subsp. atroseptica</name>
    <dbReference type="NCBI Taxonomy" id="218491"/>
    <lineage>
        <taxon>Bacteria</taxon>
        <taxon>Pseudomonadati</taxon>
        <taxon>Pseudomonadota</taxon>
        <taxon>Gammaproteobacteria</taxon>
        <taxon>Enterobacterales</taxon>
        <taxon>Pectobacteriaceae</taxon>
        <taxon>Pectobacterium</taxon>
    </lineage>
</organism>
<protein>
    <recommendedName>
        <fullName evidence="1">Phosphopentomutase</fullName>
        <ecNumber evidence="1">5.4.2.7</ecNumber>
    </recommendedName>
    <alternativeName>
        <fullName evidence="1">Phosphodeoxyribomutase</fullName>
    </alternativeName>
</protein>
<gene>
    <name evidence="1" type="primary">deoB</name>
    <name type="ordered locus">ECA0729</name>
</gene>
<comment type="function">
    <text evidence="1">Isomerase that catalyzes the conversion of deoxy-ribose 1-phosphate (dRib-1-P) and ribose 1-phosphate (Rib-1-P) to deoxy-ribose 5-phosphate (dRib-5-P) and ribose 5-phosphate (Rib-5-P), respectively.</text>
</comment>
<comment type="catalytic activity">
    <reaction evidence="1">
        <text>2-deoxy-alpha-D-ribose 1-phosphate = 2-deoxy-D-ribose 5-phosphate</text>
        <dbReference type="Rhea" id="RHEA:27658"/>
        <dbReference type="ChEBI" id="CHEBI:57259"/>
        <dbReference type="ChEBI" id="CHEBI:62877"/>
        <dbReference type="EC" id="5.4.2.7"/>
    </reaction>
</comment>
<comment type="catalytic activity">
    <reaction evidence="1">
        <text>alpha-D-ribose 1-phosphate = D-ribose 5-phosphate</text>
        <dbReference type="Rhea" id="RHEA:18793"/>
        <dbReference type="ChEBI" id="CHEBI:57720"/>
        <dbReference type="ChEBI" id="CHEBI:78346"/>
        <dbReference type="EC" id="5.4.2.7"/>
    </reaction>
</comment>
<comment type="cofactor">
    <cofactor evidence="1">
        <name>Mn(2+)</name>
        <dbReference type="ChEBI" id="CHEBI:29035"/>
    </cofactor>
    <text evidence="1">Binds 2 manganese ions.</text>
</comment>
<comment type="pathway">
    <text evidence="1">Carbohydrate degradation; 2-deoxy-D-ribose 1-phosphate degradation; D-glyceraldehyde 3-phosphate and acetaldehyde from 2-deoxy-alpha-D-ribose 1-phosphate: step 1/2.</text>
</comment>
<comment type="subcellular location">
    <subcellularLocation>
        <location evidence="1">Cytoplasm</location>
    </subcellularLocation>
</comment>
<comment type="similarity">
    <text evidence="1">Belongs to the phosphopentomutase family.</text>
</comment>
<evidence type="ECO:0000255" key="1">
    <source>
        <dbReference type="HAMAP-Rule" id="MF_00740"/>
    </source>
</evidence>
<name>DEOB_PECAS</name>
<keyword id="KW-0963">Cytoplasm</keyword>
<keyword id="KW-0413">Isomerase</keyword>
<keyword id="KW-0464">Manganese</keyword>
<keyword id="KW-0479">Metal-binding</keyword>
<keyword id="KW-1185">Reference proteome</keyword>
<reference key="1">
    <citation type="journal article" date="2004" name="Proc. Natl. Acad. Sci. U.S.A.">
        <title>Genome sequence of the enterobacterial phytopathogen Erwinia carotovora subsp. atroseptica and characterization of virulence factors.</title>
        <authorList>
            <person name="Bell K.S."/>
            <person name="Sebaihia M."/>
            <person name="Pritchard L."/>
            <person name="Holden M.T.G."/>
            <person name="Hyman L.J."/>
            <person name="Holeva M.C."/>
            <person name="Thomson N.R."/>
            <person name="Bentley S.D."/>
            <person name="Churcher L.J.C."/>
            <person name="Mungall K."/>
            <person name="Atkin R."/>
            <person name="Bason N."/>
            <person name="Brooks K."/>
            <person name="Chillingworth T."/>
            <person name="Clark K."/>
            <person name="Doggett J."/>
            <person name="Fraser A."/>
            <person name="Hance Z."/>
            <person name="Hauser H."/>
            <person name="Jagels K."/>
            <person name="Moule S."/>
            <person name="Norbertczak H."/>
            <person name="Ormond D."/>
            <person name="Price C."/>
            <person name="Quail M.A."/>
            <person name="Sanders M."/>
            <person name="Walker D."/>
            <person name="Whitehead S."/>
            <person name="Salmond G.P.C."/>
            <person name="Birch P.R.J."/>
            <person name="Parkhill J."/>
            <person name="Toth I.K."/>
        </authorList>
    </citation>
    <scope>NUCLEOTIDE SEQUENCE [LARGE SCALE GENOMIC DNA]</scope>
    <source>
        <strain>SCRI 1043 / ATCC BAA-672</strain>
    </source>
</reference>
<proteinExistence type="inferred from homology"/>
<feature type="chain" id="PRO_0000258283" description="Phosphopentomutase">
    <location>
        <begin position="1"/>
        <end position="407"/>
    </location>
</feature>
<feature type="binding site" evidence="1">
    <location>
        <position position="10"/>
    </location>
    <ligand>
        <name>Mn(2+)</name>
        <dbReference type="ChEBI" id="CHEBI:29035"/>
        <label>1</label>
    </ligand>
</feature>
<feature type="binding site" evidence="1">
    <location>
        <position position="306"/>
    </location>
    <ligand>
        <name>Mn(2+)</name>
        <dbReference type="ChEBI" id="CHEBI:29035"/>
        <label>2</label>
    </ligand>
</feature>
<feature type="binding site" evidence="1">
    <location>
        <position position="311"/>
    </location>
    <ligand>
        <name>Mn(2+)</name>
        <dbReference type="ChEBI" id="CHEBI:29035"/>
        <label>2</label>
    </ligand>
</feature>
<feature type="binding site" evidence="1">
    <location>
        <position position="347"/>
    </location>
    <ligand>
        <name>Mn(2+)</name>
        <dbReference type="ChEBI" id="CHEBI:29035"/>
        <label>1</label>
    </ligand>
</feature>
<feature type="binding site" evidence="1">
    <location>
        <position position="348"/>
    </location>
    <ligand>
        <name>Mn(2+)</name>
        <dbReference type="ChEBI" id="CHEBI:29035"/>
        <label>1</label>
    </ligand>
</feature>
<feature type="binding site" evidence="1">
    <location>
        <position position="359"/>
    </location>
    <ligand>
        <name>Mn(2+)</name>
        <dbReference type="ChEBI" id="CHEBI:29035"/>
        <label>2</label>
    </ligand>
</feature>
<accession>Q6D990</accession>
<sequence length="407" mass="43993">MKRVYIMVLDSFGIGSSADAERFGDVGSDTLGHIAQACAAGTADKGRSGSLHLPNLSRLGLGKAAEASTGTFPAGLDENADIIGAYAHASEISSGKDTPSGHWEIAGVPVLFDWGYFKDEENSFPQELLDKLVKRANLPGYLGNCHSSGTVILDQLAEEHMKTGKPIFYTSADSVFQIACHEETFGLDKLYELCEIAREELTEGDYNIGRVIARPFIGDKPGNFERTGNRHDLAVEPPAPTILKKLVDEKGGEVVSVGKIADIYAQVGITKKVKATGIDALFDATLKEMDSAGDNTIVFTNFVDFDSAYGHRRDIPGYAAALELFDRRLPELMSRVTGDDILILTADHGCDPSWHGTDHTRENVPVLIYGPKVKPGSYGHRETFADIGQTVAAYFGLSPMDYGKSIL</sequence>
<dbReference type="EC" id="5.4.2.7" evidence="1"/>
<dbReference type="EMBL" id="BX950851">
    <property type="protein sequence ID" value="CAG73643.1"/>
    <property type="molecule type" value="Genomic_DNA"/>
</dbReference>
<dbReference type="RefSeq" id="WP_011092336.1">
    <property type="nucleotide sequence ID" value="NC_004547.2"/>
</dbReference>
<dbReference type="SMR" id="Q6D990"/>
<dbReference type="STRING" id="218491.ECA0729"/>
<dbReference type="KEGG" id="eca:ECA0729"/>
<dbReference type="PATRIC" id="fig|218491.5.peg.727"/>
<dbReference type="eggNOG" id="COG1015">
    <property type="taxonomic scope" value="Bacteria"/>
</dbReference>
<dbReference type="HOGENOM" id="CLU_053861_0_0_6"/>
<dbReference type="OrthoDB" id="9769930at2"/>
<dbReference type="UniPathway" id="UPA00002">
    <property type="reaction ID" value="UER00467"/>
</dbReference>
<dbReference type="Proteomes" id="UP000007966">
    <property type="component" value="Chromosome"/>
</dbReference>
<dbReference type="GO" id="GO:0005829">
    <property type="term" value="C:cytosol"/>
    <property type="evidence" value="ECO:0007669"/>
    <property type="project" value="TreeGrafter"/>
</dbReference>
<dbReference type="GO" id="GO:0000287">
    <property type="term" value="F:magnesium ion binding"/>
    <property type="evidence" value="ECO:0007669"/>
    <property type="project" value="InterPro"/>
</dbReference>
<dbReference type="GO" id="GO:0030145">
    <property type="term" value="F:manganese ion binding"/>
    <property type="evidence" value="ECO:0007669"/>
    <property type="project" value="UniProtKB-UniRule"/>
</dbReference>
<dbReference type="GO" id="GO:0008973">
    <property type="term" value="F:phosphopentomutase activity"/>
    <property type="evidence" value="ECO:0007669"/>
    <property type="project" value="UniProtKB-UniRule"/>
</dbReference>
<dbReference type="GO" id="GO:0006018">
    <property type="term" value="P:2-deoxyribose 1-phosphate catabolic process"/>
    <property type="evidence" value="ECO:0007669"/>
    <property type="project" value="UniProtKB-UniRule"/>
</dbReference>
<dbReference type="GO" id="GO:0006015">
    <property type="term" value="P:5-phosphoribose 1-diphosphate biosynthetic process"/>
    <property type="evidence" value="ECO:0007669"/>
    <property type="project" value="UniProtKB-UniPathway"/>
</dbReference>
<dbReference type="GO" id="GO:0043094">
    <property type="term" value="P:metabolic compound salvage"/>
    <property type="evidence" value="ECO:0007669"/>
    <property type="project" value="InterPro"/>
</dbReference>
<dbReference type="GO" id="GO:0009117">
    <property type="term" value="P:nucleotide metabolic process"/>
    <property type="evidence" value="ECO:0007669"/>
    <property type="project" value="InterPro"/>
</dbReference>
<dbReference type="CDD" id="cd16009">
    <property type="entry name" value="PPM"/>
    <property type="match status" value="1"/>
</dbReference>
<dbReference type="FunFam" id="3.30.70.1250:FF:000001">
    <property type="entry name" value="Phosphopentomutase"/>
    <property type="match status" value="1"/>
</dbReference>
<dbReference type="Gene3D" id="3.40.720.10">
    <property type="entry name" value="Alkaline Phosphatase, subunit A"/>
    <property type="match status" value="1"/>
</dbReference>
<dbReference type="Gene3D" id="3.30.70.1250">
    <property type="entry name" value="Phosphopentomutase"/>
    <property type="match status" value="1"/>
</dbReference>
<dbReference type="HAMAP" id="MF_00740">
    <property type="entry name" value="Phosphopentomut"/>
    <property type="match status" value="1"/>
</dbReference>
<dbReference type="InterPro" id="IPR017850">
    <property type="entry name" value="Alkaline_phosphatase_core_sf"/>
</dbReference>
<dbReference type="InterPro" id="IPR010045">
    <property type="entry name" value="DeoB"/>
</dbReference>
<dbReference type="InterPro" id="IPR006124">
    <property type="entry name" value="Metalloenzyme"/>
</dbReference>
<dbReference type="InterPro" id="IPR024052">
    <property type="entry name" value="Phosphopentomutase_DeoB_cap_sf"/>
</dbReference>
<dbReference type="NCBIfam" id="TIGR01696">
    <property type="entry name" value="deoB"/>
    <property type="match status" value="1"/>
</dbReference>
<dbReference type="NCBIfam" id="NF003766">
    <property type="entry name" value="PRK05362.1"/>
    <property type="match status" value="1"/>
</dbReference>
<dbReference type="PANTHER" id="PTHR21110">
    <property type="entry name" value="PHOSPHOPENTOMUTASE"/>
    <property type="match status" value="1"/>
</dbReference>
<dbReference type="PANTHER" id="PTHR21110:SF0">
    <property type="entry name" value="PHOSPHOPENTOMUTASE"/>
    <property type="match status" value="1"/>
</dbReference>
<dbReference type="Pfam" id="PF01676">
    <property type="entry name" value="Metalloenzyme"/>
    <property type="match status" value="1"/>
</dbReference>
<dbReference type="PIRSF" id="PIRSF001491">
    <property type="entry name" value="Ppentomutase"/>
    <property type="match status" value="1"/>
</dbReference>
<dbReference type="SUPFAM" id="SSF53649">
    <property type="entry name" value="Alkaline phosphatase-like"/>
    <property type="match status" value="1"/>
</dbReference>
<dbReference type="SUPFAM" id="SSF143856">
    <property type="entry name" value="DeoB insert domain-like"/>
    <property type="match status" value="1"/>
</dbReference>